<keyword id="KW-0227">DNA damage</keyword>
<keyword id="KW-0234">DNA repair</keyword>
<feature type="chain" id="PRO_1000010081" description="DNA mismatch repair protein MutL">
    <location>
        <begin position="1"/>
        <end position="605"/>
    </location>
</feature>
<comment type="function">
    <text evidence="1">This protein is involved in the repair of mismatches in DNA. It is required for dam-dependent methyl-directed DNA mismatch repair. May act as a 'molecular matchmaker', a protein that promotes the formation of a stable complex between two or more DNA-binding proteins in an ATP-dependent manner without itself being part of a final effector complex.</text>
</comment>
<comment type="similarity">
    <text evidence="1">Belongs to the DNA mismatch repair MutL/HexB family.</text>
</comment>
<sequence length="605" mass="65075">MAIKQLSETLINQIAAGEVIERPASAAKELIENALDAGATRIEIATAGGGKTLLRVTDNGLGMSPADLELAIRRHCTSKLDGSLADIRTLGFRGEALPSIGSVARLSITTRTAEAREGATITITGGRSDPVRPSAAVVGTVVEVRELFFATPARLKFMKSERAETAAISEVVRRMAIAFPKVRFVLSGSDRSALEFPATGDDRLARMAQVLGRDFRDNAIEIDAEREGARLTGFAGVPTFNRGNSLQQYAFVNGRPVQDKLIMSAIRAAYAETVPQGRYPVAVLSLTIDPALVDVNVHPAKSDVRFRDPGLIRGLIIGAIREALMREGDRAATTGAQGLMRAFRPEFHRGDQQRPQEPWTAATSPYRPFSPGGAARGFAETPQAAFSDFAQPSARNAAVPVDSIQAADGQAASFPLGAARAQLHENYIVAQTDDGLVIVDQHAAHERLVFETMRTALHARPVPAQALLIPEIVDLPEEDCDRLVAHAGEFTRLGLAIERFGPAAIAVRETPAMLGEMDAAGLVRQLADELAEWDTADGLAGRLEYLAATMACHGSVRSGRRLRTEEMNALLRRMEATPGSGQCNHGRPTYIELKLADIERLFGRS</sequence>
<proteinExistence type="inferred from homology"/>
<evidence type="ECO:0000255" key="1">
    <source>
        <dbReference type="HAMAP-Rule" id="MF_00149"/>
    </source>
</evidence>
<organism>
    <name type="scientific">Sinorhizobium medicae (strain WSM419)</name>
    <name type="common">Ensifer medicae</name>
    <dbReference type="NCBI Taxonomy" id="366394"/>
    <lineage>
        <taxon>Bacteria</taxon>
        <taxon>Pseudomonadati</taxon>
        <taxon>Pseudomonadota</taxon>
        <taxon>Alphaproteobacteria</taxon>
        <taxon>Hyphomicrobiales</taxon>
        <taxon>Rhizobiaceae</taxon>
        <taxon>Sinorhizobium/Ensifer group</taxon>
        <taxon>Sinorhizobium</taxon>
    </lineage>
</organism>
<dbReference type="EMBL" id="CP000738">
    <property type="protein sequence ID" value="ABR59285.1"/>
    <property type="molecule type" value="Genomic_DNA"/>
</dbReference>
<dbReference type="RefSeq" id="WP_011974632.1">
    <property type="nucleotide sequence ID" value="NC_009636.1"/>
</dbReference>
<dbReference type="RefSeq" id="YP_001326120.1">
    <property type="nucleotide sequence ID" value="NC_009636.1"/>
</dbReference>
<dbReference type="SMR" id="A6U6K5"/>
<dbReference type="STRING" id="366394.Smed_0428"/>
<dbReference type="GeneID" id="61609702"/>
<dbReference type="KEGG" id="smd:Smed_0428"/>
<dbReference type="PATRIC" id="fig|366394.8.peg.3510"/>
<dbReference type="eggNOG" id="COG0323">
    <property type="taxonomic scope" value="Bacteria"/>
</dbReference>
<dbReference type="HOGENOM" id="CLU_004131_4_2_5"/>
<dbReference type="OrthoDB" id="9763467at2"/>
<dbReference type="Proteomes" id="UP000001108">
    <property type="component" value="Chromosome"/>
</dbReference>
<dbReference type="GO" id="GO:0032300">
    <property type="term" value="C:mismatch repair complex"/>
    <property type="evidence" value="ECO:0007669"/>
    <property type="project" value="InterPro"/>
</dbReference>
<dbReference type="GO" id="GO:0005524">
    <property type="term" value="F:ATP binding"/>
    <property type="evidence" value="ECO:0007669"/>
    <property type="project" value="InterPro"/>
</dbReference>
<dbReference type="GO" id="GO:0016887">
    <property type="term" value="F:ATP hydrolysis activity"/>
    <property type="evidence" value="ECO:0007669"/>
    <property type="project" value="InterPro"/>
</dbReference>
<dbReference type="GO" id="GO:0140664">
    <property type="term" value="F:ATP-dependent DNA damage sensor activity"/>
    <property type="evidence" value="ECO:0007669"/>
    <property type="project" value="InterPro"/>
</dbReference>
<dbReference type="GO" id="GO:0030983">
    <property type="term" value="F:mismatched DNA binding"/>
    <property type="evidence" value="ECO:0007669"/>
    <property type="project" value="InterPro"/>
</dbReference>
<dbReference type="GO" id="GO:0006298">
    <property type="term" value="P:mismatch repair"/>
    <property type="evidence" value="ECO:0007669"/>
    <property type="project" value="UniProtKB-UniRule"/>
</dbReference>
<dbReference type="CDD" id="cd16926">
    <property type="entry name" value="HATPase_MutL-MLH-PMS-like"/>
    <property type="match status" value="1"/>
</dbReference>
<dbReference type="CDD" id="cd00782">
    <property type="entry name" value="MutL_Trans"/>
    <property type="match status" value="1"/>
</dbReference>
<dbReference type="FunFam" id="3.30.565.10:FF:000003">
    <property type="entry name" value="DNA mismatch repair endonuclease MutL"/>
    <property type="match status" value="1"/>
</dbReference>
<dbReference type="Gene3D" id="3.30.230.10">
    <property type="match status" value="1"/>
</dbReference>
<dbReference type="Gene3D" id="3.30.565.10">
    <property type="entry name" value="Histidine kinase-like ATPase, C-terminal domain"/>
    <property type="match status" value="1"/>
</dbReference>
<dbReference type="Gene3D" id="3.30.1540.20">
    <property type="entry name" value="MutL, C-terminal domain, dimerisation subdomain"/>
    <property type="match status" value="1"/>
</dbReference>
<dbReference type="Gene3D" id="3.30.1370.100">
    <property type="entry name" value="MutL, C-terminal domain, regulatory subdomain"/>
    <property type="match status" value="1"/>
</dbReference>
<dbReference type="HAMAP" id="MF_00149">
    <property type="entry name" value="DNA_mis_repair"/>
    <property type="match status" value="1"/>
</dbReference>
<dbReference type="InterPro" id="IPR014762">
    <property type="entry name" value="DNA_mismatch_repair_CS"/>
</dbReference>
<dbReference type="InterPro" id="IPR020667">
    <property type="entry name" value="DNA_mismatch_repair_MutL"/>
</dbReference>
<dbReference type="InterPro" id="IPR013507">
    <property type="entry name" value="DNA_mismatch_S5_2-like"/>
</dbReference>
<dbReference type="InterPro" id="IPR036890">
    <property type="entry name" value="HATPase_C_sf"/>
</dbReference>
<dbReference type="InterPro" id="IPR002099">
    <property type="entry name" value="MutL/Mlh/PMS"/>
</dbReference>
<dbReference type="InterPro" id="IPR038973">
    <property type="entry name" value="MutL/Mlh/Pms-like"/>
</dbReference>
<dbReference type="InterPro" id="IPR014790">
    <property type="entry name" value="MutL_C"/>
</dbReference>
<dbReference type="InterPro" id="IPR042120">
    <property type="entry name" value="MutL_C_dimsub"/>
</dbReference>
<dbReference type="InterPro" id="IPR042121">
    <property type="entry name" value="MutL_C_regsub"/>
</dbReference>
<dbReference type="InterPro" id="IPR037198">
    <property type="entry name" value="MutL_C_sf"/>
</dbReference>
<dbReference type="InterPro" id="IPR020568">
    <property type="entry name" value="Ribosomal_Su5_D2-typ_SF"/>
</dbReference>
<dbReference type="InterPro" id="IPR014721">
    <property type="entry name" value="Ribsml_uS5_D2-typ_fold_subgr"/>
</dbReference>
<dbReference type="NCBIfam" id="TIGR00585">
    <property type="entry name" value="mutl"/>
    <property type="match status" value="1"/>
</dbReference>
<dbReference type="NCBIfam" id="NF000953">
    <property type="entry name" value="PRK00095.2-4"/>
    <property type="match status" value="1"/>
</dbReference>
<dbReference type="PANTHER" id="PTHR10073">
    <property type="entry name" value="DNA MISMATCH REPAIR PROTEIN MLH, PMS, MUTL"/>
    <property type="match status" value="1"/>
</dbReference>
<dbReference type="PANTHER" id="PTHR10073:SF12">
    <property type="entry name" value="DNA MISMATCH REPAIR PROTEIN MLH1"/>
    <property type="match status" value="1"/>
</dbReference>
<dbReference type="Pfam" id="PF01119">
    <property type="entry name" value="DNA_mis_repair"/>
    <property type="match status" value="1"/>
</dbReference>
<dbReference type="Pfam" id="PF13589">
    <property type="entry name" value="HATPase_c_3"/>
    <property type="match status" value="1"/>
</dbReference>
<dbReference type="Pfam" id="PF08676">
    <property type="entry name" value="MutL_C"/>
    <property type="match status" value="1"/>
</dbReference>
<dbReference type="SMART" id="SM01340">
    <property type="entry name" value="DNA_mis_repair"/>
    <property type="match status" value="1"/>
</dbReference>
<dbReference type="SMART" id="SM00853">
    <property type="entry name" value="MutL_C"/>
    <property type="match status" value="1"/>
</dbReference>
<dbReference type="SUPFAM" id="SSF55874">
    <property type="entry name" value="ATPase domain of HSP90 chaperone/DNA topoisomerase II/histidine kinase"/>
    <property type="match status" value="1"/>
</dbReference>
<dbReference type="SUPFAM" id="SSF118116">
    <property type="entry name" value="DNA mismatch repair protein MutL"/>
    <property type="match status" value="1"/>
</dbReference>
<dbReference type="SUPFAM" id="SSF54211">
    <property type="entry name" value="Ribosomal protein S5 domain 2-like"/>
    <property type="match status" value="1"/>
</dbReference>
<dbReference type="PROSITE" id="PS00058">
    <property type="entry name" value="DNA_MISMATCH_REPAIR_1"/>
    <property type="match status" value="1"/>
</dbReference>
<protein>
    <recommendedName>
        <fullName evidence="1">DNA mismatch repair protein MutL</fullName>
    </recommendedName>
</protein>
<gene>
    <name evidence="1" type="primary">mutL</name>
    <name type="ordered locus">Smed_0428</name>
</gene>
<accession>A6U6K5</accession>
<reference key="1">
    <citation type="submission" date="2007-06" db="EMBL/GenBank/DDBJ databases">
        <title>Complete sequence of Sinorhizobium medicae WSM419 chromosome.</title>
        <authorList>
            <consortium name="US DOE Joint Genome Institute"/>
            <person name="Copeland A."/>
            <person name="Lucas S."/>
            <person name="Lapidus A."/>
            <person name="Barry K."/>
            <person name="Glavina del Rio T."/>
            <person name="Dalin E."/>
            <person name="Tice H."/>
            <person name="Pitluck S."/>
            <person name="Chain P."/>
            <person name="Malfatti S."/>
            <person name="Shin M."/>
            <person name="Vergez L."/>
            <person name="Schmutz J."/>
            <person name="Larimer F."/>
            <person name="Land M."/>
            <person name="Hauser L."/>
            <person name="Kyrpides N."/>
            <person name="Mikhailova N."/>
            <person name="Reeve W.G."/>
            <person name="Richardson P."/>
        </authorList>
    </citation>
    <scope>NUCLEOTIDE SEQUENCE [LARGE SCALE GENOMIC DNA]</scope>
    <source>
        <strain>WSM419</strain>
    </source>
</reference>
<name>MUTL_SINMW</name>